<organism>
    <name type="scientific">Bacillus pumilus (strain SAFR-032)</name>
    <dbReference type="NCBI Taxonomy" id="315750"/>
    <lineage>
        <taxon>Bacteria</taxon>
        <taxon>Bacillati</taxon>
        <taxon>Bacillota</taxon>
        <taxon>Bacilli</taxon>
        <taxon>Bacillales</taxon>
        <taxon>Bacillaceae</taxon>
        <taxon>Bacillus</taxon>
    </lineage>
</organism>
<name>MURC_BACP2</name>
<sequence length="432" mass="48663">MTVYHFVGIKGTGMSPLAQILHDTGYTVQGSDIEKHIFTQKALEERNIKILPFDPDNIQPGMTVIAGNAFPDTHPEIERALSEGIPVIRYHKFLGEYMDSFTNVAITGAHGKTSTTGLLAHVMQSAKPTSYLIGDGSGMGKENSEYFVFEACEYRRHFLSYHPDYAIMTNIDFDHPDYFSDIDDVFDAFQNMALQVKKAIIACGDDEHLPKIQAKVPVVYYGFNEENDFQARNVVKNTEGTTFDVFVRNTFYDTFYIPAYGNHNVLNSLAVIALCHYESIDVELIKGALTTFGGVKRRFNEKVVGAQVLIDDYAHHPTEIEVTIEAARQKYPDREIVAVFQPHTFTRTQQFLSEFADSLKKADYVYLCDIFGSARENIGKLSIEDLREKIPQAQLIAEEDTSVLKAHKDGILIFMGAGDIQKYLRAYEKVAV</sequence>
<reference key="1">
    <citation type="journal article" date="2007" name="PLoS ONE">
        <title>Paradoxical DNA repair and peroxide resistance gene conservation in Bacillus pumilus SAFR-032.</title>
        <authorList>
            <person name="Gioia J."/>
            <person name="Yerrapragada S."/>
            <person name="Qin X."/>
            <person name="Jiang H."/>
            <person name="Igboeli O.C."/>
            <person name="Muzny D."/>
            <person name="Dugan-Rocha S."/>
            <person name="Ding Y."/>
            <person name="Hawes A."/>
            <person name="Liu W."/>
            <person name="Perez L."/>
            <person name="Kovar C."/>
            <person name="Dinh H."/>
            <person name="Lee S."/>
            <person name="Nazareth L."/>
            <person name="Blyth P."/>
            <person name="Holder M."/>
            <person name="Buhay C."/>
            <person name="Tirumalai M.R."/>
            <person name="Liu Y."/>
            <person name="Dasgupta I."/>
            <person name="Bokhetache L."/>
            <person name="Fujita M."/>
            <person name="Karouia F."/>
            <person name="Eswara Moorthy P."/>
            <person name="Siefert J."/>
            <person name="Uzman A."/>
            <person name="Buzumbo P."/>
            <person name="Verma A."/>
            <person name="Zwiya H."/>
            <person name="McWilliams B.D."/>
            <person name="Olowu A."/>
            <person name="Clinkenbeard K.D."/>
            <person name="Newcombe D."/>
            <person name="Golebiewski L."/>
            <person name="Petrosino J.F."/>
            <person name="Nicholson W.L."/>
            <person name="Fox G.E."/>
            <person name="Venkateswaran K."/>
            <person name="Highlander S.K."/>
            <person name="Weinstock G.M."/>
        </authorList>
    </citation>
    <scope>NUCLEOTIDE SEQUENCE [LARGE SCALE GENOMIC DNA]</scope>
    <source>
        <strain>SAFR-032</strain>
    </source>
</reference>
<protein>
    <recommendedName>
        <fullName evidence="1">UDP-N-acetylmuramate--L-alanine ligase</fullName>
        <ecNumber evidence="1">6.3.2.8</ecNumber>
    </recommendedName>
    <alternativeName>
        <fullName evidence="1">UDP-N-acetylmuramoyl-L-alanine synthetase</fullName>
    </alternativeName>
</protein>
<comment type="function">
    <text evidence="1">Cell wall formation.</text>
</comment>
<comment type="catalytic activity">
    <reaction evidence="1">
        <text>UDP-N-acetyl-alpha-D-muramate + L-alanine + ATP = UDP-N-acetyl-alpha-D-muramoyl-L-alanine + ADP + phosphate + H(+)</text>
        <dbReference type="Rhea" id="RHEA:23372"/>
        <dbReference type="ChEBI" id="CHEBI:15378"/>
        <dbReference type="ChEBI" id="CHEBI:30616"/>
        <dbReference type="ChEBI" id="CHEBI:43474"/>
        <dbReference type="ChEBI" id="CHEBI:57972"/>
        <dbReference type="ChEBI" id="CHEBI:70757"/>
        <dbReference type="ChEBI" id="CHEBI:83898"/>
        <dbReference type="ChEBI" id="CHEBI:456216"/>
        <dbReference type="EC" id="6.3.2.8"/>
    </reaction>
</comment>
<comment type="pathway">
    <text evidence="1">Cell wall biogenesis; peptidoglycan biosynthesis.</text>
</comment>
<comment type="subcellular location">
    <subcellularLocation>
        <location evidence="1">Cytoplasm</location>
    </subcellularLocation>
</comment>
<comment type="similarity">
    <text evidence="1">Belongs to the MurCDEF family.</text>
</comment>
<feature type="chain" id="PRO_1000057314" description="UDP-N-acetylmuramate--L-alanine ligase">
    <location>
        <begin position="1"/>
        <end position="432"/>
    </location>
</feature>
<feature type="binding site" evidence="1">
    <location>
        <begin position="108"/>
        <end position="114"/>
    </location>
    <ligand>
        <name>ATP</name>
        <dbReference type="ChEBI" id="CHEBI:30616"/>
    </ligand>
</feature>
<evidence type="ECO:0000255" key="1">
    <source>
        <dbReference type="HAMAP-Rule" id="MF_00046"/>
    </source>
</evidence>
<proteinExistence type="inferred from homology"/>
<dbReference type="EC" id="6.3.2.8" evidence="1"/>
<dbReference type="EMBL" id="CP000813">
    <property type="protein sequence ID" value="ABV63284.1"/>
    <property type="molecule type" value="Genomic_DNA"/>
</dbReference>
<dbReference type="RefSeq" id="WP_012010920.1">
    <property type="nucleotide sequence ID" value="NC_009848.4"/>
</dbReference>
<dbReference type="SMR" id="A8FGB7"/>
<dbReference type="STRING" id="315750.BPUM_2626"/>
<dbReference type="GeneID" id="5621890"/>
<dbReference type="KEGG" id="bpu:BPUM_2626"/>
<dbReference type="eggNOG" id="COG0773">
    <property type="taxonomic scope" value="Bacteria"/>
</dbReference>
<dbReference type="HOGENOM" id="CLU_028104_1_0_9"/>
<dbReference type="OrthoDB" id="9804126at2"/>
<dbReference type="UniPathway" id="UPA00219"/>
<dbReference type="Proteomes" id="UP000001355">
    <property type="component" value="Chromosome"/>
</dbReference>
<dbReference type="GO" id="GO:0005737">
    <property type="term" value="C:cytoplasm"/>
    <property type="evidence" value="ECO:0007669"/>
    <property type="project" value="UniProtKB-SubCell"/>
</dbReference>
<dbReference type="GO" id="GO:0005524">
    <property type="term" value="F:ATP binding"/>
    <property type="evidence" value="ECO:0007669"/>
    <property type="project" value="UniProtKB-UniRule"/>
</dbReference>
<dbReference type="GO" id="GO:0008763">
    <property type="term" value="F:UDP-N-acetylmuramate-L-alanine ligase activity"/>
    <property type="evidence" value="ECO:0007669"/>
    <property type="project" value="UniProtKB-UniRule"/>
</dbReference>
<dbReference type="GO" id="GO:0051301">
    <property type="term" value="P:cell division"/>
    <property type="evidence" value="ECO:0007669"/>
    <property type="project" value="UniProtKB-KW"/>
</dbReference>
<dbReference type="GO" id="GO:0071555">
    <property type="term" value="P:cell wall organization"/>
    <property type="evidence" value="ECO:0007669"/>
    <property type="project" value="UniProtKB-KW"/>
</dbReference>
<dbReference type="GO" id="GO:0009252">
    <property type="term" value="P:peptidoglycan biosynthetic process"/>
    <property type="evidence" value="ECO:0007669"/>
    <property type="project" value="UniProtKB-UniRule"/>
</dbReference>
<dbReference type="GO" id="GO:0008360">
    <property type="term" value="P:regulation of cell shape"/>
    <property type="evidence" value="ECO:0007669"/>
    <property type="project" value="UniProtKB-KW"/>
</dbReference>
<dbReference type="Gene3D" id="3.90.190.20">
    <property type="entry name" value="Mur ligase, C-terminal domain"/>
    <property type="match status" value="1"/>
</dbReference>
<dbReference type="Gene3D" id="3.40.1190.10">
    <property type="entry name" value="Mur-like, catalytic domain"/>
    <property type="match status" value="1"/>
</dbReference>
<dbReference type="Gene3D" id="3.40.50.720">
    <property type="entry name" value="NAD(P)-binding Rossmann-like Domain"/>
    <property type="match status" value="1"/>
</dbReference>
<dbReference type="HAMAP" id="MF_00046">
    <property type="entry name" value="MurC"/>
    <property type="match status" value="1"/>
</dbReference>
<dbReference type="InterPro" id="IPR036565">
    <property type="entry name" value="Mur-like_cat_sf"/>
</dbReference>
<dbReference type="InterPro" id="IPR004101">
    <property type="entry name" value="Mur_ligase_C"/>
</dbReference>
<dbReference type="InterPro" id="IPR036615">
    <property type="entry name" value="Mur_ligase_C_dom_sf"/>
</dbReference>
<dbReference type="InterPro" id="IPR013221">
    <property type="entry name" value="Mur_ligase_cen"/>
</dbReference>
<dbReference type="InterPro" id="IPR000713">
    <property type="entry name" value="Mur_ligase_N"/>
</dbReference>
<dbReference type="InterPro" id="IPR050061">
    <property type="entry name" value="MurCDEF_pg_biosynth"/>
</dbReference>
<dbReference type="InterPro" id="IPR005758">
    <property type="entry name" value="UDP-N-AcMur_Ala_ligase_MurC"/>
</dbReference>
<dbReference type="NCBIfam" id="TIGR01082">
    <property type="entry name" value="murC"/>
    <property type="match status" value="1"/>
</dbReference>
<dbReference type="PANTHER" id="PTHR43445:SF3">
    <property type="entry name" value="UDP-N-ACETYLMURAMATE--L-ALANINE LIGASE"/>
    <property type="match status" value="1"/>
</dbReference>
<dbReference type="PANTHER" id="PTHR43445">
    <property type="entry name" value="UDP-N-ACETYLMURAMATE--L-ALANINE LIGASE-RELATED"/>
    <property type="match status" value="1"/>
</dbReference>
<dbReference type="Pfam" id="PF01225">
    <property type="entry name" value="Mur_ligase"/>
    <property type="match status" value="1"/>
</dbReference>
<dbReference type="Pfam" id="PF02875">
    <property type="entry name" value="Mur_ligase_C"/>
    <property type="match status" value="1"/>
</dbReference>
<dbReference type="Pfam" id="PF08245">
    <property type="entry name" value="Mur_ligase_M"/>
    <property type="match status" value="1"/>
</dbReference>
<dbReference type="SUPFAM" id="SSF51984">
    <property type="entry name" value="MurCD N-terminal domain"/>
    <property type="match status" value="1"/>
</dbReference>
<dbReference type="SUPFAM" id="SSF53623">
    <property type="entry name" value="MurD-like peptide ligases, catalytic domain"/>
    <property type="match status" value="1"/>
</dbReference>
<dbReference type="SUPFAM" id="SSF53244">
    <property type="entry name" value="MurD-like peptide ligases, peptide-binding domain"/>
    <property type="match status" value="1"/>
</dbReference>
<accession>A8FGB7</accession>
<keyword id="KW-0067">ATP-binding</keyword>
<keyword id="KW-0131">Cell cycle</keyword>
<keyword id="KW-0132">Cell division</keyword>
<keyword id="KW-0133">Cell shape</keyword>
<keyword id="KW-0961">Cell wall biogenesis/degradation</keyword>
<keyword id="KW-0963">Cytoplasm</keyword>
<keyword id="KW-0436">Ligase</keyword>
<keyword id="KW-0547">Nucleotide-binding</keyword>
<keyword id="KW-0573">Peptidoglycan synthesis</keyword>
<gene>
    <name evidence="1" type="primary">murC</name>
    <name type="ordered locus">BPUM_2626</name>
</gene>